<name>DECO_MACDE</name>
<protein>
    <recommendedName>
        <fullName>Decorsin</fullName>
    </recommendedName>
</protein>
<feature type="peptide" id="PRO_0000044770" description="Decorsin">
    <location>
        <begin position="1"/>
        <end position="39"/>
    </location>
</feature>
<feature type="region of interest" description="High affinity binding domain" evidence="1">
    <location>
        <begin position="27"/>
        <end position="38"/>
    </location>
</feature>
<feature type="short sequence motif" description="Cell attachment site">
    <location>
        <begin position="31"/>
        <end position="33"/>
    </location>
</feature>
<feature type="sequence variant" description="In N-3 isoform.">
    <location>
        <begin position="1"/>
        <end position="3"/>
    </location>
</feature>
<feature type="strand" evidence="3">
    <location>
        <begin position="15"/>
        <end position="22"/>
    </location>
</feature>
<feature type="strand" evidence="3">
    <location>
        <begin position="31"/>
        <end position="33"/>
    </location>
</feature>
<evidence type="ECO:0000255" key="1"/>
<evidence type="ECO:0000305" key="2"/>
<evidence type="ECO:0007829" key="3">
    <source>
        <dbReference type="PDB" id="1DEC"/>
    </source>
</evidence>
<accession>P17350</accession>
<proteinExistence type="evidence at protein level"/>
<sequence length="39" mass="4384">APRLPQCQGDDQEKCLCNKDECPPGQCRFPRGDADPYCE</sequence>
<comment type="function">
    <text>Inhibits fibrinogen interaction with platelet receptors expressed on glycoprotein IIb-IIIa complex. May prevent blood from clotting during either feeding and/or storage of ingested blood.</text>
</comment>
<comment type="subcellular location">
    <subcellularLocation>
        <location>Secreted</location>
    </subcellularLocation>
</comment>
<comment type="similarity">
    <text evidence="2">Belongs to the ornatin family.</text>
</comment>
<dbReference type="PIR" id="A36453">
    <property type="entry name" value="A36453"/>
</dbReference>
<dbReference type="PDB" id="1DEC">
    <property type="method" value="NMR"/>
    <property type="chains" value="A=1-39"/>
</dbReference>
<dbReference type="PDBsum" id="1DEC"/>
<dbReference type="SMR" id="P17350"/>
<dbReference type="EvolutionaryTrace" id="P17350"/>
<dbReference type="GO" id="GO:0005576">
    <property type="term" value="C:extracellular region"/>
    <property type="evidence" value="ECO:0007669"/>
    <property type="project" value="UniProtKB-SubCell"/>
</dbReference>
<dbReference type="GO" id="GO:0004857">
    <property type="term" value="F:enzyme inhibitor activity"/>
    <property type="evidence" value="ECO:0007669"/>
    <property type="project" value="InterPro"/>
</dbReference>
<dbReference type="GO" id="GO:0007155">
    <property type="term" value="P:cell adhesion"/>
    <property type="evidence" value="ECO:0007669"/>
    <property type="project" value="UniProtKB-KW"/>
</dbReference>
<dbReference type="InterPro" id="IPR011061">
    <property type="entry name" value="Hirudin/antistatin"/>
</dbReference>
<dbReference type="SUPFAM" id="SSF57262">
    <property type="entry name" value="Leech antihemostatic proteins"/>
    <property type="match status" value="1"/>
</dbReference>
<organism>
    <name type="scientific">Macrobdella decora</name>
    <name type="common">North American leech</name>
    <dbReference type="NCBI Taxonomy" id="6405"/>
    <lineage>
        <taxon>Eukaryota</taxon>
        <taxon>Metazoa</taxon>
        <taxon>Spiralia</taxon>
        <taxon>Lophotrochozoa</taxon>
        <taxon>Annelida</taxon>
        <taxon>Clitellata</taxon>
        <taxon>Hirudinea</taxon>
        <taxon>Hirudinida</taxon>
        <taxon>Hirudiniformes</taxon>
        <taxon>Hirudinidae</taxon>
        <taxon>Macrobdella</taxon>
    </lineage>
</organism>
<reference key="1">
    <citation type="journal article" date="1990" name="J. Biol. Chem.">
        <title>Decorsin. A potent glycoprotein IIb-IIIa antagonist and platelet aggregation inhibitor from the leech Macrobdella decora.</title>
        <authorList>
            <person name="Seymour J.L."/>
            <person name="Henzel W.J."/>
            <person name="Nevins B."/>
            <person name="Stults J.T."/>
            <person name="Lazarus R.A."/>
        </authorList>
    </citation>
    <scope>PROTEIN SEQUENCE</scope>
</reference>
<reference key="2">
    <citation type="journal article" date="1994" name="Science">
        <title>Structure of the RGD protein decorsin: conserved motif and distinct function in leech proteins that affect blood clotting.</title>
        <authorList>
            <person name="Krezel A.M."/>
            <person name="Wagner G."/>
            <person name="Seymour-Ulmer J."/>
            <person name="Lazarus R.A."/>
        </authorList>
    </citation>
    <scope>STRUCTURE BY NMR</scope>
</reference>
<keyword id="KW-0002">3D-structure</keyword>
<keyword id="KW-0130">Cell adhesion</keyword>
<keyword id="KW-0903">Direct protein sequencing</keyword>
<keyword id="KW-0964">Secreted</keyword>